<proteinExistence type="inferred from homology"/>
<protein>
    <recommendedName>
        <fullName evidence="1">Small ribosomal subunit protein bS6</fullName>
    </recommendedName>
    <alternativeName>
        <fullName evidence="3">30S ribosomal protein S6</fullName>
    </alternativeName>
</protein>
<sequence length="131" mass="15187">MRHYEIVFMVHPDQSEQVPGMIERYTAAITGAEGKIHRLEDWGRRQLAYPINKLHKAHYVLMNVEAPQEVIDELETTFRFNDAVIRSMVMRTKHAVTEASPMVKAKDERRERRDDFANETADDAEAGDSEE</sequence>
<reference key="1">
    <citation type="journal article" date="2008" name="J. Bacteriol.">
        <title>Insights into the environmental resistance gene pool from the genome sequence of the multidrug-resistant environmental isolate Escherichia coli SMS-3-5.</title>
        <authorList>
            <person name="Fricke W.F."/>
            <person name="Wright M.S."/>
            <person name="Lindell A.H."/>
            <person name="Harkins D.M."/>
            <person name="Baker-Austin C."/>
            <person name="Ravel J."/>
            <person name="Stepanauskas R."/>
        </authorList>
    </citation>
    <scope>NUCLEOTIDE SEQUENCE [LARGE SCALE GENOMIC DNA]</scope>
    <source>
        <strain>SMS-3-5 / SECEC</strain>
    </source>
</reference>
<comment type="function">
    <text evidence="1">Binds together with bS18 to 16S ribosomal RNA.</text>
</comment>
<comment type="similarity">
    <text evidence="1">Belongs to the bacterial ribosomal protein bS6 family.</text>
</comment>
<gene>
    <name evidence="1" type="primary">rpsF</name>
    <name type="ordered locus">EcSMS35_4671</name>
</gene>
<dbReference type="EMBL" id="CP000970">
    <property type="protein sequence ID" value="ACB18343.1"/>
    <property type="molecule type" value="Genomic_DNA"/>
</dbReference>
<dbReference type="RefSeq" id="WP_001216676.1">
    <property type="nucleotide sequence ID" value="NC_010498.1"/>
</dbReference>
<dbReference type="SMR" id="B1LQM0"/>
<dbReference type="GeneID" id="93777623"/>
<dbReference type="KEGG" id="ecm:EcSMS35_4671"/>
<dbReference type="HOGENOM" id="CLU_113441_6_1_6"/>
<dbReference type="Proteomes" id="UP000007011">
    <property type="component" value="Chromosome"/>
</dbReference>
<dbReference type="GO" id="GO:0022627">
    <property type="term" value="C:cytosolic small ribosomal subunit"/>
    <property type="evidence" value="ECO:0007669"/>
    <property type="project" value="TreeGrafter"/>
</dbReference>
<dbReference type="GO" id="GO:0070181">
    <property type="term" value="F:small ribosomal subunit rRNA binding"/>
    <property type="evidence" value="ECO:0007669"/>
    <property type="project" value="TreeGrafter"/>
</dbReference>
<dbReference type="GO" id="GO:0003735">
    <property type="term" value="F:structural constituent of ribosome"/>
    <property type="evidence" value="ECO:0007669"/>
    <property type="project" value="InterPro"/>
</dbReference>
<dbReference type="GO" id="GO:0006412">
    <property type="term" value="P:translation"/>
    <property type="evidence" value="ECO:0007669"/>
    <property type="project" value="UniProtKB-UniRule"/>
</dbReference>
<dbReference type="CDD" id="cd00473">
    <property type="entry name" value="bS6"/>
    <property type="match status" value="1"/>
</dbReference>
<dbReference type="FunFam" id="3.30.70.60:FF:000003">
    <property type="entry name" value="30S ribosomal protein S6"/>
    <property type="match status" value="1"/>
</dbReference>
<dbReference type="Gene3D" id="3.30.70.60">
    <property type="match status" value="1"/>
</dbReference>
<dbReference type="HAMAP" id="MF_00360">
    <property type="entry name" value="Ribosomal_bS6"/>
    <property type="match status" value="1"/>
</dbReference>
<dbReference type="InterPro" id="IPR000529">
    <property type="entry name" value="Ribosomal_bS6"/>
</dbReference>
<dbReference type="InterPro" id="IPR020815">
    <property type="entry name" value="Ribosomal_bS6_CS"/>
</dbReference>
<dbReference type="InterPro" id="IPR035980">
    <property type="entry name" value="Ribosomal_bS6_sf"/>
</dbReference>
<dbReference type="InterPro" id="IPR020814">
    <property type="entry name" value="Ribosomal_S6_plastid/chlpt"/>
</dbReference>
<dbReference type="InterPro" id="IPR014717">
    <property type="entry name" value="Transl_elong_EF1B/ribsomal_bS6"/>
</dbReference>
<dbReference type="NCBIfam" id="TIGR00166">
    <property type="entry name" value="S6"/>
    <property type="match status" value="1"/>
</dbReference>
<dbReference type="PANTHER" id="PTHR21011">
    <property type="entry name" value="MITOCHONDRIAL 28S RIBOSOMAL PROTEIN S6"/>
    <property type="match status" value="1"/>
</dbReference>
<dbReference type="PANTHER" id="PTHR21011:SF1">
    <property type="entry name" value="SMALL RIBOSOMAL SUBUNIT PROTEIN BS6M"/>
    <property type="match status" value="1"/>
</dbReference>
<dbReference type="Pfam" id="PF01250">
    <property type="entry name" value="Ribosomal_S6"/>
    <property type="match status" value="1"/>
</dbReference>
<dbReference type="SUPFAM" id="SSF54995">
    <property type="entry name" value="Ribosomal protein S6"/>
    <property type="match status" value="1"/>
</dbReference>
<dbReference type="PROSITE" id="PS01048">
    <property type="entry name" value="RIBOSOMAL_S6"/>
    <property type="match status" value="1"/>
</dbReference>
<name>RS6_ECOSM</name>
<keyword id="KW-0007">Acetylation</keyword>
<keyword id="KW-0687">Ribonucleoprotein</keyword>
<keyword id="KW-0689">Ribosomal protein</keyword>
<keyword id="KW-0694">RNA-binding</keyword>
<keyword id="KW-0699">rRNA-binding</keyword>
<accession>B1LQM0</accession>
<organism>
    <name type="scientific">Escherichia coli (strain SMS-3-5 / SECEC)</name>
    <dbReference type="NCBI Taxonomy" id="439855"/>
    <lineage>
        <taxon>Bacteria</taxon>
        <taxon>Pseudomonadati</taxon>
        <taxon>Pseudomonadota</taxon>
        <taxon>Gammaproteobacteria</taxon>
        <taxon>Enterobacterales</taxon>
        <taxon>Enterobacteriaceae</taxon>
        <taxon>Escherichia</taxon>
    </lineage>
</organism>
<feature type="chain" id="PRO_1000120750" description="Small ribosomal subunit protein bS6">
    <location>
        <begin position="1"/>
        <end position="131"/>
    </location>
</feature>
<feature type="region of interest" description="Disordered" evidence="2">
    <location>
        <begin position="98"/>
        <end position="131"/>
    </location>
</feature>
<feature type="compositionally biased region" description="Basic and acidic residues" evidence="2">
    <location>
        <begin position="104"/>
        <end position="116"/>
    </location>
</feature>
<feature type="compositionally biased region" description="Acidic residues" evidence="2">
    <location>
        <begin position="120"/>
        <end position="131"/>
    </location>
</feature>
<feature type="modified residue" description="N6-acetyllysine" evidence="1">
    <location>
        <position position="93"/>
    </location>
</feature>
<evidence type="ECO:0000255" key="1">
    <source>
        <dbReference type="HAMAP-Rule" id="MF_00360"/>
    </source>
</evidence>
<evidence type="ECO:0000256" key="2">
    <source>
        <dbReference type="SAM" id="MobiDB-lite"/>
    </source>
</evidence>
<evidence type="ECO:0000305" key="3"/>